<dbReference type="EMBL" id="CP000378">
    <property type="protein sequence ID" value="ABF76811.1"/>
    <property type="molecule type" value="Genomic_DNA"/>
</dbReference>
<dbReference type="SMR" id="Q1BU94"/>
<dbReference type="HOGENOM" id="CLU_134358_0_0_4"/>
<dbReference type="GO" id="GO:0030163">
    <property type="term" value="P:protein catabolic process"/>
    <property type="evidence" value="ECO:0007669"/>
    <property type="project" value="InterPro"/>
</dbReference>
<dbReference type="GO" id="GO:0006508">
    <property type="term" value="P:proteolysis"/>
    <property type="evidence" value="ECO:0007669"/>
    <property type="project" value="UniProtKB-UniRule"/>
</dbReference>
<dbReference type="FunFam" id="3.30.1390.10:FF:000002">
    <property type="entry name" value="ATP-dependent Clp protease adapter protein ClpS"/>
    <property type="match status" value="1"/>
</dbReference>
<dbReference type="Gene3D" id="3.30.1390.10">
    <property type="match status" value="1"/>
</dbReference>
<dbReference type="HAMAP" id="MF_00302">
    <property type="entry name" value="ClpS"/>
    <property type="match status" value="1"/>
</dbReference>
<dbReference type="InterPro" id="IPR022935">
    <property type="entry name" value="ClpS"/>
</dbReference>
<dbReference type="InterPro" id="IPR003769">
    <property type="entry name" value="ClpS_core"/>
</dbReference>
<dbReference type="InterPro" id="IPR014719">
    <property type="entry name" value="Ribosomal_bL12_C/ClpS-like"/>
</dbReference>
<dbReference type="NCBIfam" id="NF000672">
    <property type="entry name" value="PRK00033.1-5"/>
    <property type="match status" value="1"/>
</dbReference>
<dbReference type="PANTHER" id="PTHR33473:SF19">
    <property type="entry name" value="ATP-DEPENDENT CLP PROTEASE ADAPTER PROTEIN CLPS"/>
    <property type="match status" value="1"/>
</dbReference>
<dbReference type="PANTHER" id="PTHR33473">
    <property type="entry name" value="ATP-DEPENDENT CLP PROTEASE ADAPTER PROTEIN CLPS1, CHLOROPLASTIC"/>
    <property type="match status" value="1"/>
</dbReference>
<dbReference type="Pfam" id="PF02617">
    <property type="entry name" value="ClpS"/>
    <property type="match status" value="1"/>
</dbReference>
<dbReference type="SUPFAM" id="SSF54736">
    <property type="entry name" value="ClpS-like"/>
    <property type="match status" value="1"/>
</dbReference>
<proteinExistence type="inferred from homology"/>
<evidence type="ECO:0000255" key="1">
    <source>
        <dbReference type="HAMAP-Rule" id="MF_00302"/>
    </source>
</evidence>
<protein>
    <recommendedName>
        <fullName evidence="1">ATP-dependent Clp protease adapter protein ClpS</fullName>
    </recommendedName>
</protein>
<accession>Q1BU94</accession>
<organism>
    <name type="scientific">Burkholderia orbicola (strain AU 1054)</name>
    <dbReference type="NCBI Taxonomy" id="331271"/>
    <lineage>
        <taxon>Bacteria</taxon>
        <taxon>Pseudomonadati</taxon>
        <taxon>Pseudomonadota</taxon>
        <taxon>Betaproteobacteria</taxon>
        <taxon>Burkholderiales</taxon>
        <taxon>Burkholderiaceae</taxon>
        <taxon>Burkholderia</taxon>
        <taxon>Burkholderia cepacia complex</taxon>
        <taxon>Burkholderia orbicola</taxon>
    </lineage>
</organism>
<gene>
    <name evidence="1" type="primary">clpS</name>
    <name type="ordered locus">Bcen_1908</name>
</gene>
<sequence length="104" mass="11936">MAIIPDKQDSTVLERKQQKLKPPSMYKVVLLNDDFTPMEFVVMVVQEYFKKDRETATQIMLKVHREGRGVCGVYTRDIASTKVEQVVTHARQAGHPLQCVMEEA</sequence>
<comment type="function">
    <text evidence="1">Involved in the modulation of the specificity of the ClpAP-mediated ATP-dependent protein degradation.</text>
</comment>
<comment type="subunit">
    <text evidence="1">Binds to the N-terminal domain of the chaperone ClpA.</text>
</comment>
<comment type="similarity">
    <text evidence="1">Belongs to the ClpS family.</text>
</comment>
<feature type="chain" id="PRO_1000022592" description="ATP-dependent Clp protease adapter protein ClpS">
    <location>
        <begin position="1"/>
        <end position="104"/>
    </location>
</feature>
<name>CLPS_BURO1</name>
<reference key="1">
    <citation type="submission" date="2006-05" db="EMBL/GenBank/DDBJ databases">
        <title>Complete sequence of chromosome 1 of Burkholderia cenocepacia AU 1054.</title>
        <authorList>
            <consortium name="US DOE Joint Genome Institute"/>
            <person name="Copeland A."/>
            <person name="Lucas S."/>
            <person name="Lapidus A."/>
            <person name="Barry K."/>
            <person name="Detter J.C."/>
            <person name="Glavina del Rio T."/>
            <person name="Hammon N."/>
            <person name="Israni S."/>
            <person name="Dalin E."/>
            <person name="Tice H."/>
            <person name="Pitluck S."/>
            <person name="Chain P."/>
            <person name="Malfatti S."/>
            <person name="Shin M."/>
            <person name="Vergez L."/>
            <person name="Schmutz J."/>
            <person name="Larimer F."/>
            <person name="Land M."/>
            <person name="Hauser L."/>
            <person name="Kyrpides N."/>
            <person name="Lykidis A."/>
            <person name="LiPuma J.J."/>
            <person name="Konstantinidis K."/>
            <person name="Tiedje J.M."/>
            <person name="Richardson P."/>
        </authorList>
    </citation>
    <scope>NUCLEOTIDE SEQUENCE [LARGE SCALE GENOMIC DNA]</scope>
    <source>
        <strain>AU 1054</strain>
    </source>
</reference>